<proteinExistence type="inferred from homology"/>
<reference key="1">
    <citation type="submission" date="2007-03" db="EMBL/GenBank/DDBJ databases">
        <title>The NIAID influenza genome sequencing project.</title>
        <authorList>
            <person name="Ghedin E."/>
            <person name="Spiro D."/>
            <person name="Miller N."/>
            <person name="Zaborsky J."/>
            <person name="Feldblyum T."/>
            <person name="Subbu V."/>
            <person name="Shumway M."/>
            <person name="Sparenborg J."/>
            <person name="Groveman L."/>
            <person name="Halpin R."/>
            <person name="Sitz J."/>
            <person name="Koo H."/>
            <person name="Salzberg S.L."/>
            <person name="Webster R.G."/>
            <person name="Hoffmann E."/>
            <person name="Krauss S."/>
            <person name="Naeve C."/>
            <person name="Bao Y."/>
            <person name="Bolotov P."/>
            <person name="Dernovoy D."/>
            <person name="Kiryutin B."/>
            <person name="Lipman D.J."/>
            <person name="Tatusova T."/>
        </authorList>
    </citation>
    <scope>NUCLEOTIDE SEQUENCE [GENOMIC RNA]</scope>
</reference>
<reference key="2">
    <citation type="submission" date="2007-03" db="EMBL/GenBank/DDBJ databases">
        <authorList>
            <consortium name="The NIAID Influenza Genome Sequencing Consortium"/>
        </authorList>
    </citation>
    <scope>NUCLEOTIDE SEQUENCE [GENOMIC RNA]</scope>
</reference>
<protein>
    <recommendedName>
        <fullName>Protein PA-X</fullName>
    </recommendedName>
</protein>
<accession>P0DJW5</accession>
<organismHost>
    <name type="scientific">Aves</name>
    <dbReference type="NCBI Taxonomy" id="8782"/>
</organismHost>
<organismHost>
    <name type="scientific">Homo sapiens</name>
    <name type="common">Human</name>
    <dbReference type="NCBI Taxonomy" id="9606"/>
</organismHost>
<organismHost>
    <name type="scientific">Sus scrofa</name>
    <name type="common">Pig</name>
    <dbReference type="NCBI Taxonomy" id="9823"/>
</organismHost>
<name>PAX_I35A3</name>
<sequence>MEDFVRQCFNPMIVELAEKTMKEYGEDLKIETNKFAAICTHLEVCFMYSDFHFINEQGESIIVELGDPNALLKHRFEIIEGRDRTVAWTVVNSICNTTGAEKPKFLPDLYDYKENRFIEIGVTRREVHIYYLEKANKTKSEKTHIHIFSFTGEEMATKADYTLDEESRARIKTRLFTIRQEMASRGLWDSFVSPREVKRQLKKDLKSQEQCASLPTKVSRRTSPALKILEPMWMDSNRTATLRASFLKCPKK</sequence>
<organism>
    <name type="scientific">Influenza A virus (strain A/USA:Phila/1935 H1N1)</name>
    <dbReference type="NCBI Taxonomy" id="425570"/>
    <lineage>
        <taxon>Viruses</taxon>
        <taxon>Riboviria</taxon>
        <taxon>Orthornavirae</taxon>
        <taxon>Negarnaviricota</taxon>
        <taxon>Polyploviricotina</taxon>
        <taxon>Insthoviricetes</taxon>
        <taxon>Articulavirales</taxon>
        <taxon>Orthomyxoviridae</taxon>
        <taxon>Alphainfluenzavirus</taxon>
        <taxon>Alphainfluenzavirus influenzae</taxon>
        <taxon>Influenza A virus</taxon>
    </lineage>
</organism>
<evidence type="ECO:0000250" key="1">
    <source>
        <dbReference type="UniProtKB" id="P0CK64"/>
    </source>
</evidence>
<evidence type="ECO:0000250" key="2">
    <source>
        <dbReference type="UniProtKB" id="P0CK68"/>
    </source>
</evidence>
<evidence type="ECO:0000250" key="3">
    <source>
        <dbReference type="UniProtKB" id="P0DJW8"/>
    </source>
</evidence>
<evidence type="ECO:0000250" key="4">
    <source>
        <dbReference type="UniProtKB" id="P0DXO5"/>
    </source>
</evidence>
<evidence type="ECO:0000250" key="5">
    <source>
        <dbReference type="UniProtKB" id="P0DXO6"/>
    </source>
</evidence>
<evidence type="ECO:0000305" key="6"/>
<comment type="function">
    <text evidence="1 4">Plays a major role in the shutoff of the host protein expression by cleaving mRNAs probably via an endonuclease activity. This host shutoff allows the virus to escape from the host antiviral response (By similarity). Hijacks host RNA splicing machinery to selectively target host RNAs containing introns for destruction. This may explain the preferential degradation of RNAs that have undergone co- or post-transcriptional processing (By similarity).</text>
</comment>
<comment type="subcellular location">
    <subcellularLocation>
        <location evidence="4">Host cytoplasm</location>
    </subcellularLocation>
    <subcellularLocation>
        <location evidence="4">Host nucleus</location>
    </subcellularLocation>
</comment>
<comment type="alternative products">
    <event type="ribosomal frameshifting"/>
    <isoform>
        <id>P0DJW5-1</id>
        <name>PA-X</name>
        <sequence type="displayed"/>
    </isoform>
    <isoform>
        <id>A4GCM6-1</id>
        <name>PA</name>
        <sequence type="external"/>
    </isoform>
</comment>
<comment type="domain">
    <text evidence="1 4">The probable endonuclease active site in the N-terminus and the basic amino acid cluster in the C-terminus are important for the shutoff activity. The C-terminus acts as a nuclear localization signal (By similarity). The C-terminus is recruited to host protein complexes involved in nuclear Pol II RNA processing (By similarity).</text>
</comment>
<comment type="similarity">
    <text evidence="6">Belongs to the influenza viruses PA-X family.</text>
</comment>
<gene>
    <name type="primary">PA</name>
</gene>
<feature type="chain" id="PRO_0000419428" description="Protein PA-X">
    <location>
        <begin position="1"/>
        <end position="252"/>
    </location>
</feature>
<feature type="active site" evidence="2">
    <location>
        <position position="80"/>
    </location>
</feature>
<feature type="active site" evidence="2">
    <location>
        <position position="108"/>
    </location>
</feature>
<feature type="site" description="Important for efficient shutoff activity" evidence="5">
    <location>
        <position position="28"/>
    </location>
</feature>
<feature type="site" description="Important for efficient shutoff activity" evidence="5">
    <location>
        <position position="65"/>
    </location>
</feature>
<feature type="site" description="Important for efficient shutoff activity and nuclear localization" evidence="4">
    <location>
        <position position="195"/>
    </location>
</feature>
<feature type="site" description="Important for efficient shutoff activity and nuclear localization" evidence="4">
    <location>
        <position position="198"/>
    </location>
</feature>
<feature type="site" description="Important for efficient shutoff activity and nuclear localization" evidence="4">
    <location>
        <position position="199"/>
    </location>
</feature>
<feature type="site" description="Important for efficient shutoff activity" evidence="3">
    <location>
        <position position="202"/>
    </location>
</feature>
<feature type="site" description="Important for efficient shutoff activity" evidence="3">
    <location>
        <position position="203"/>
    </location>
</feature>
<feature type="site" description="Important for efficient shutoff activity" evidence="3">
    <location>
        <position position="206"/>
    </location>
</feature>
<dbReference type="EMBL" id="CY020474">
    <property type="status" value="NOT_ANNOTATED_CDS"/>
    <property type="molecule type" value="Viral_cRNA"/>
</dbReference>
<dbReference type="SMR" id="P0DJW5"/>
<dbReference type="Proteomes" id="UP000000829">
    <property type="component" value="Genome"/>
</dbReference>
<dbReference type="GO" id="GO:0003723">
    <property type="term" value="F:RNA binding"/>
    <property type="evidence" value="ECO:0007669"/>
    <property type="project" value="InterPro"/>
</dbReference>
<dbReference type="GO" id="GO:0039694">
    <property type="term" value="P:viral RNA genome replication"/>
    <property type="evidence" value="ECO:0007669"/>
    <property type="project" value="InterPro"/>
</dbReference>
<dbReference type="GO" id="GO:0075523">
    <property type="term" value="P:viral translational frameshifting"/>
    <property type="evidence" value="ECO:0007669"/>
    <property type="project" value="UniProtKB-KW"/>
</dbReference>
<dbReference type="FunFam" id="3.40.91.90:FF:000001">
    <property type="entry name" value="Polymerase acidic protein"/>
    <property type="match status" value="1"/>
</dbReference>
<dbReference type="Gene3D" id="3.40.91.90">
    <property type="entry name" value="Influenza RNA-dependent RNA polymerase subunit PA, endonuclease domain"/>
    <property type="match status" value="1"/>
</dbReference>
<dbReference type="InterPro" id="IPR001009">
    <property type="entry name" value="PA/PA-X"/>
</dbReference>
<dbReference type="InterPro" id="IPR038372">
    <property type="entry name" value="PA/PA-X_sf"/>
</dbReference>
<dbReference type="Pfam" id="PF00603">
    <property type="entry name" value="Flu_PA"/>
    <property type="match status" value="1"/>
</dbReference>
<keyword id="KW-1132">Decay of host mRNAs by virus</keyword>
<keyword id="KW-1262">Eukaryotic host gene expression shutoff by virus</keyword>
<keyword id="KW-1035">Host cytoplasm</keyword>
<keyword id="KW-1190">Host gene expression shutoff by virus</keyword>
<keyword id="KW-1192">Host mRNA suppression by virus</keyword>
<keyword id="KW-1048">Host nucleus</keyword>
<keyword id="KW-0945">Host-virus interaction</keyword>
<keyword id="KW-0688">Ribosomal frameshifting</keyword>